<keyword id="KW-0687">Ribonucleoprotein</keyword>
<keyword id="KW-0689">Ribosomal protein</keyword>
<keyword id="KW-0694">RNA-binding</keyword>
<keyword id="KW-0699">rRNA-binding</keyword>
<evidence type="ECO:0000255" key="1">
    <source>
        <dbReference type="HAMAP-Rule" id="MF_01365"/>
    </source>
</evidence>
<evidence type="ECO:0000305" key="2"/>
<feature type="chain" id="PRO_1000055264" description="Large ribosomal subunit protein uL6">
    <location>
        <begin position="1"/>
        <end position="179"/>
    </location>
</feature>
<proteinExistence type="inferred from homology"/>
<reference key="1">
    <citation type="journal article" date="2007" name="Proc. Natl. Acad. Sci. U.S.A.">
        <title>Genome plasticity of BCG and impact on vaccine efficacy.</title>
        <authorList>
            <person name="Brosch R."/>
            <person name="Gordon S.V."/>
            <person name="Garnier T."/>
            <person name="Eiglmeier K."/>
            <person name="Frigui W."/>
            <person name="Valenti P."/>
            <person name="Dos Santos S."/>
            <person name="Duthoy S."/>
            <person name="Lacroix C."/>
            <person name="Garcia-Pelayo C."/>
            <person name="Inwald J.K."/>
            <person name="Golby P."/>
            <person name="Garcia J.N."/>
            <person name="Hewinson R.G."/>
            <person name="Behr M.A."/>
            <person name="Quail M.A."/>
            <person name="Churcher C."/>
            <person name="Barrell B.G."/>
            <person name="Parkhill J."/>
            <person name="Cole S.T."/>
        </authorList>
    </citation>
    <scope>NUCLEOTIDE SEQUENCE [LARGE SCALE GENOMIC DNA]</scope>
    <source>
        <strain>BCG / Pasteur 1173P2</strain>
    </source>
</reference>
<accession>A1KGK0</accession>
<organism>
    <name type="scientific">Mycobacterium bovis (strain BCG / Pasteur 1173P2)</name>
    <dbReference type="NCBI Taxonomy" id="410289"/>
    <lineage>
        <taxon>Bacteria</taxon>
        <taxon>Bacillati</taxon>
        <taxon>Actinomycetota</taxon>
        <taxon>Actinomycetes</taxon>
        <taxon>Mycobacteriales</taxon>
        <taxon>Mycobacteriaceae</taxon>
        <taxon>Mycobacterium</taxon>
        <taxon>Mycobacterium tuberculosis complex</taxon>
    </lineage>
</organism>
<gene>
    <name evidence="1" type="primary">rplF</name>
    <name type="ordered locus">BCG_0769</name>
</gene>
<comment type="function">
    <text evidence="1">This protein binds to the 23S rRNA, and is important in its secondary structure. It is located near the subunit interface in the base of the L7/L12 stalk, and near the tRNA binding site of the peptidyltransferase center.</text>
</comment>
<comment type="subunit">
    <text evidence="1">Part of the 50S ribosomal subunit.</text>
</comment>
<comment type="similarity">
    <text evidence="1">Belongs to the universal ribosomal protein uL6 family.</text>
</comment>
<protein>
    <recommendedName>
        <fullName evidence="1">Large ribosomal subunit protein uL6</fullName>
    </recommendedName>
    <alternativeName>
        <fullName evidence="2">50S ribosomal protein L6</fullName>
    </alternativeName>
</protein>
<name>RL6_MYCBP</name>
<dbReference type="EMBL" id="AM408590">
    <property type="protein sequence ID" value="CAL70755.1"/>
    <property type="molecule type" value="Genomic_DNA"/>
</dbReference>
<dbReference type="RefSeq" id="WP_003403673.1">
    <property type="nucleotide sequence ID" value="NC_008769.1"/>
</dbReference>
<dbReference type="SMR" id="A1KGK0"/>
<dbReference type="GeneID" id="45424684"/>
<dbReference type="KEGG" id="mbb:BCG_0769"/>
<dbReference type="HOGENOM" id="CLU_065464_1_2_11"/>
<dbReference type="Proteomes" id="UP000001472">
    <property type="component" value="Chromosome"/>
</dbReference>
<dbReference type="GO" id="GO:0022625">
    <property type="term" value="C:cytosolic large ribosomal subunit"/>
    <property type="evidence" value="ECO:0007669"/>
    <property type="project" value="TreeGrafter"/>
</dbReference>
<dbReference type="GO" id="GO:0019843">
    <property type="term" value="F:rRNA binding"/>
    <property type="evidence" value="ECO:0007669"/>
    <property type="project" value="UniProtKB-UniRule"/>
</dbReference>
<dbReference type="GO" id="GO:0003735">
    <property type="term" value="F:structural constituent of ribosome"/>
    <property type="evidence" value="ECO:0007669"/>
    <property type="project" value="InterPro"/>
</dbReference>
<dbReference type="GO" id="GO:0002181">
    <property type="term" value="P:cytoplasmic translation"/>
    <property type="evidence" value="ECO:0007669"/>
    <property type="project" value="TreeGrafter"/>
</dbReference>
<dbReference type="FunFam" id="3.90.930.12:FF:000001">
    <property type="entry name" value="50S ribosomal protein L6"/>
    <property type="match status" value="1"/>
</dbReference>
<dbReference type="FunFam" id="3.90.930.12:FF:000002">
    <property type="entry name" value="50S ribosomal protein L6"/>
    <property type="match status" value="1"/>
</dbReference>
<dbReference type="Gene3D" id="3.90.930.12">
    <property type="entry name" value="Ribosomal protein L6, alpha-beta domain"/>
    <property type="match status" value="2"/>
</dbReference>
<dbReference type="HAMAP" id="MF_01365_B">
    <property type="entry name" value="Ribosomal_uL6_B"/>
    <property type="match status" value="1"/>
</dbReference>
<dbReference type="InterPro" id="IPR000702">
    <property type="entry name" value="Ribosomal_uL6-like"/>
</dbReference>
<dbReference type="InterPro" id="IPR036789">
    <property type="entry name" value="Ribosomal_uL6-like_a/b-dom_sf"/>
</dbReference>
<dbReference type="InterPro" id="IPR020040">
    <property type="entry name" value="Ribosomal_uL6_a/b-dom"/>
</dbReference>
<dbReference type="InterPro" id="IPR019906">
    <property type="entry name" value="Ribosomal_uL6_bac-type"/>
</dbReference>
<dbReference type="InterPro" id="IPR002358">
    <property type="entry name" value="Ribosomal_uL6_CS"/>
</dbReference>
<dbReference type="NCBIfam" id="TIGR03654">
    <property type="entry name" value="L6_bact"/>
    <property type="match status" value="1"/>
</dbReference>
<dbReference type="PANTHER" id="PTHR11655">
    <property type="entry name" value="60S/50S RIBOSOMAL PROTEIN L6/L9"/>
    <property type="match status" value="1"/>
</dbReference>
<dbReference type="PANTHER" id="PTHR11655:SF14">
    <property type="entry name" value="LARGE RIBOSOMAL SUBUNIT PROTEIN UL6M"/>
    <property type="match status" value="1"/>
</dbReference>
<dbReference type="Pfam" id="PF00347">
    <property type="entry name" value="Ribosomal_L6"/>
    <property type="match status" value="2"/>
</dbReference>
<dbReference type="PIRSF" id="PIRSF002162">
    <property type="entry name" value="Ribosomal_L6"/>
    <property type="match status" value="1"/>
</dbReference>
<dbReference type="PRINTS" id="PR00059">
    <property type="entry name" value="RIBOSOMALL6"/>
</dbReference>
<dbReference type="SUPFAM" id="SSF56053">
    <property type="entry name" value="Ribosomal protein L6"/>
    <property type="match status" value="2"/>
</dbReference>
<dbReference type="PROSITE" id="PS00525">
    <property type="entry name" value="RIBOSOMAL_L6_1"/>
    <property type="match status" value="1"/>
</dbReference>
<sequence length="179" mass="19377">MSRIGKQPIPVPAGVDVTIEGQSISVKGPKGTLGLTVAEPIKVARNDDGAIVVTRPDDERRNRSLHGLSRTLVSNLVTGVTQGYTTKMEIFGVGYRVQLKGSNLEFALGYSHPVVIEAPEGITFAVQAPTKFTVSGIDKQKVGQIAANIRRLRRPDPYKGKGVRYEGEQIRRKVGKTGK</sequence>